<gene>
    <name evidence="1" type="primary">panC</name>
    <name type="ordered locus">EcE24377A_0136</name>
</gene>
<dbReference type="EC" id="6.3.2.1" evidence="1"/>
<dbReference type="EMBL" id="CP000800">
    <property type="protein sequence ID" value="ABV20126.1"/>
    <property type="molecule type" value="Genomic_DNA"/>
</dbReference>
<dbReference type="RefSeq" id="WP_000905383.1">
    <property type="nucleotide sequence ID" value="NC_009801.1"/>
</dbReference>
<dbReference type="BMRB" id="A7ZHM3"/>
<dbReference type="SMR" id="A7ZHM3"/>
<dbReference type="GeneID" id="75202052"/>
<dbReference type="KEGG" id="ecw:EcE24377A_0136"/>
<dbReference type="HOGENOM" id="CLU_047148_0_0_6"/>
<dbReference type="UniPathway" id="UPA00028">
    <property type="reaction ID" value="UER00005"/>
</dbReference>
<dbReference type="Proteomes" id="UP000001122">
    <property type="component" value="Chromosome"/>
</dbReference>
<dbReference type="GO" id="GO:0005829">
    <property type="term" value="C:cytosol"/>
    <property type="evidence" value="ECO:0007669"/>
    <property type="project" value="TreeGrafter"/>
</dbReference>
<dbReference type="GO" id="GO:0005524">
    <property type="term" value="F:ATP binding"/>
    <property type="evidence" value="ECO:0007669"/>
    <property type="project" value="UniProtKB-KW"/>
</dbReference>
<dbReference type="GO" id="GO:0004592">
    <property type="term" value="F:pantoate-beta-alanine ligase activity"/>
    <property type="evidence" value="ECO:0007669"/>
    <property type="project" value="UniProtKB-UniRule"/>
</dbReference>
<dbReference type="GO" id="GO:0015940">
    <property type="term" value="P:pantothenate biosynthetic process"/>
    <property type="evidence" value="ECO:0007669"/>
    <property type="project" value="UniProtKB-UniRule"/>
</dbReference>
<dbReference type="CDD" id="cd00560">
    <property type="entry name" value="PanC"/>
    <property type="match status" value="1"/>
</dbReference>
<dbReference type="FunFam" id="3.30.1300.10:FF:000001">
    <property type="entry name" value="Pantothenate synthetase"/>
    <property type="match status" value="1"/>
</dbReference>
<dbReference type="FunFam" id="3.40.50.620:FF:000013">
    <property type="entry name" value="Pantothenate synthetase"/>
    <property type="match status" value="1"/>
</dbReference>
<dbReference type="Gene3D" id="3.40.50.620">
    <property type="entry name" value="HUPs"/>
    <property type="match status" value="1"/>
</dbReference>
<dbReference type="Gene3D" id="3.30.1300.10">
    <property type="entry name" value="Pantoate-beta-alanine ligase, C-terminal domain"/>
    <property type="match status" value="1"/>
</dbReference>
<dbReference type="HAMAP" id="MF_00158">
    <property type="entry name" value="PanC"/>
    <property type="match status" value="1"/>
</dbReference>
<dbReference type="InterPro" id="IPR004821">
    <property type="entry name" value="Cyt_trans-like"/>
</dbReference>
<dbReference type="InterPro" id="IPR003721">
    <property type="entry name" value="Pantoate_ligase"/>
</dbReference>
<dbReference type="InterPro" id="IPR042176">
    <property type="entry name" value="Pantoate_ligase_C"/>
</dbReference>
<dbReference type="InterPro" id="IPR014729">
    <property type="entry name" value="Rossmann-like_a/b/a_fold"/>
</dbReference>
<dbReference type="NCBIfam" id="TIGR00125">
    <property type="entry name" value="cyt_tran_rel"/>
    <property type="match status" value="1"/>
</dbReference>
<dbReference type="NCBIfam" id="TIGR00018">
    <property type="entry name" value="panC"/>
    <property type="match status" value="1"/>
</dbReference>
<dbReference type="PANTHER" id="PTHR21299">
    <property type="entry name" value="CYTIDYLATE KINASE/PANTOATE-BETA-ALANINE LIGASE"/>
    <property type="match status" value="1"/>
</dbReference>
<dbReference type="PANTHER" id="PTHR21299:SF1">
    <property type="entry name" value="PANTOATE--BETA-ALANINE LIGASE"/>
    <property type="match status" value="1"/>
</dbReference>
<dbReference type="Pfam" id="PF02569">
    <property type="entry name" value="Pantoate_ligase"/>
    <property type="match status" value="1"/>
</dbReference>
<dbReference type="SUPFAM" id="SSF52374">
    <property type="entry name" value="Nucleotidylyl transferase"/>
    <property type="match status" value="1"/>
</dbReference>
<evidence type="ECO:0000255" key="1">
    <source>
        <dbReference type="HAMAP-Rule" id="MF_00158"/>
    </source>
</evidence>
<organism>
    <name type="scientific">Escherichia coli O139:H28 (strain E24377A / ETEC)</name>
    <dbReference type="NCBI Taxonomy" id="331111"/>
    <lineage>
        <taxon>Bacteria</taxon>
        <taxon>Pseudomonadati</taxon>
        <taxon>Pseudomonadota</taxon>
        <taxon>Gammaproteobacteria</taxon>
        <taxon>Enterobacterales</taxon>
        <taxon>Enterobacteriaceae</taxon>
        <taxon>Escherichia</taxon>
    </lineage>
</organism>
<proteinExistence type="inferred from homology"/>
<sequence>MLIIETLPLLRQQIRRLRMEGKRVALVPTMGNLHDGHMKLVDEAKARADVVVVSIFVNPMQFDRPEDLARYPRTLQEDCEKLNKRKVDLVFAPSVKEIYPNGTETHTYVDVPGLSTMLEGASRPGHFRGVSTIVSKLFNLVQPDIACFGEKDFQQLALIRKMVADMGFDIEIVGVPIMRAKDGLALSSRNGYLTAEQRKIAPGLYKVLSSIADKLQAGERDLDEIITIAGQELNEKGFRADDIQIRDADTLLEVSETSKRAVILVAAWLGDARLIDNKMVELA</sequence>
<protein>
    <recommendedName>
        <fullName evidence="1">Pantothenate synthetase</fullName>
        <shortName evidence="1">PS</shortName>
        <ecNumber evidence="1">6.3.2.1</ecNumber>
    </recommendedName>
    <alternativeName>
        <fullName evidence="1">Pantoate--beta-alanine ligase</fullName>
    </alternativeName>
    <alternativeName>
        <fullName evidence="1">Pantoate-activating enzyme</fullName>
    </alternativeName>
</protein>
<feature type="chain" id="PRO_1000097059" description="Pantothenate synthetase">
    <location>
        <begin position="1"/>
        <end position="283"/>
    </location>
</feature>
<feature type="active site" description="Proton donor" evidence="1">
    <location>
        <position position="37"/>
    </location>
</feature>
<feature type="binding site" evidence="1">
    <location>
        <begin position="30"/>
        <end position="37"/>
    </location>
    <ligand>
        <name>ATP</name>
        <dbReference type="ChEBI" id="CHEBI:30616"/>
    </ligand>
</feature>
<feature type="binding site" evidence="1">
    <location>
        <position position="61"/>
    </location>
    <ligand>
        <name>(R)-pantoate</name>
        <dbReference type="ChEBI" id="CHEBI:15980"/>
    </ligand>
</feature>
<feature type="binding site" evidence="1">
    <location>
        <position position="61"/>
    </location>
    <ligand>
        <name>beta-alanine</name>
        <dbReference type="ChEBI" id="CHEBI:57966"/>
    </ligand>
</feature>
<feature type="binding site" evidence="1">
    <location>
        <begin position="149"/>
        <end position="152"/>
    </location>
    <ligand>
        <name>ATP</name>
        <dbReference type="ChEBI" id="CHEBI:30616"/>
    </ligand>
</feature>
<feature type="binding site" evidence="1">
    <location>
        <position position="155"/>
    </location>
    <ligand>
        <name>(R)-pantoate</name>
        <dbReference type="ChEBI" id="CHEBI:15980"/>
    </ligand>
</feature>
<feature type="binding site" evidence="1">
    <location>
        <begin position="186"/>
        <end position="189"/>
    </location>
    <ligand>
        <name>ATP</name>
        <dbReference type="ChEBI" id="CHEBI:30616"/>
    </ligand>
</feature>
<reference key="1">
    <citation type="journal article" date="2008" name="J. Bacteriol.">
        <title>The pangenome structure of Escherichia coli: comparative genomic analysis of E. coli commensal and pathogenic isolates.</title>
        <authorList>
            <person name="Rasko D.A."/>
            <person name="Rosovitz M.J."/>
            <person name="Myers G.S.A."/>
            <person name="Mongodin E.F."/>
            <person name="Fricke W.F."/>
            <person name="Gajer P."/>
            <person name="Crabtree J."/>
            <person name="Sebaihia M."/>
            <person name="Thomson N.R."/>
            <person name="Chaudhuri R."/>
            <person name="Henderson I.R."/>
            <person name="Sperandio V."/>
            <person name="Ravel J."/>
        </authorList>
    </citation>
    <scope>NUCLEOTIDE SEQUENCE [LARGE SCALE GENOMIC DNA]</scope>
    <source>
        <strain>E24377A / ETEC</strain>
    </source>
</reference>
<comment type="function">
    <text evidence="1">Catalyzes the condensation of pantoate with beta-alanine in an ATP-dependent reaction via a pantoyl-adenylate intermediate.</text>
</comment>
<comment type="catalytic activity">
    <reaction evidence="1">
        <text>(R)-pantoate + beta-alanine + ATP = (R)-pantothenate + AMP + diphosphate + H(+)</text>
        <dbReference type="Rhea" id="RHEA:10912"/>
        <dbReference type="ChEBI" id="CHEBI:15378"/>
        <dbReference type="ChEBI" id="CHEBI:15980"/>
        <dbReference type="ChEBI" id="CHEBI:29032"/>
        <dbReference type="ChEBI" id="CHEBI:30616"/>
        <dbReference type="ChEBI" id="CHEBI:33019"/>
        <dbReference type="ChEBI" id="CHEBI:57966"/>
        <dbReference type="ChEBI" id="CHEBI:456215"/>
        <dbReference type="EC" id="6.3.2.1"/>
    </reaction>
</comment>
<comment type="pathway">
    <text evidence="1">Cofactor biosynthesis; (R)-pantothenate biosynthesis; (R)-pantothenate from (R)-pantoate and beta-alanine: step 1/1.</text>
</comment>
<comment type="subunit">
    <text evidence="1">Homodimer.</text>
</comment>
<comment type="subcellular location">
    <subcellularLocation>
        <location evidence="1">Cytoplasm</location>
    </subcellularLocation>
</comment>
<comment type="miscellaneous">
    <text evidence="1">The reaction proceeds by a bi uni uni bi ping pong mechanism.</text>
</comment>
<comment type="similarity">
    <text evidence="1">Belongs to the pantothenate synthetase family.</text>
</comment>
<accession>A7ZHM3</accession>
<keyword id="KW-0067">ATP-binding</keyword>
<keyword id="KW-0963">Cytoplasm</keyword>
<keyword id="KW-0436">Ligase</keyword>
<keyword id="KW-0547">Nucleotide-binding</keyword>
<keyword id="KW-0566">Pantothenate biosynthesis</keyword>
<keyword id="KW-1185">Reference proteome</keyword>
<name>PANC_ECO24</name>